<protein>
    <recommendedName>
        <fullName evidence="1">Triosephosphate isomerase</fullName>
        <shortName evidence="1">TIM</shortName>
        <shortName evidence="1">TPI</shortName>
        <ecNumber evidence="1">5.3.1.1</ecNumber>
    </recommendedName>
    <alternativeName>
        <fullName evidence="1">Triose-phosphate isomerase</fullName>
    </alternativeName>
</protein>
<sequence>MRRKVLAGNWKMYKTRGEARAFLEAFVPLISPGAENREVILCGPFTCLDLLSAQAGPYAVGAQNVHWADHGAYTGEIAPQMLVELGVHYVIVGHSERREYFNETDSTVNRRLNNAQDHDLVPILCVGETESVRKDGITEAHIRSQLDRDLELVDMRRLIIAYEPIWAIGTGKTCEANEANRVCAMIRKHVNFEGVPILYGGSVKPENIDELMAQSDIDGVLVGGASLEAKSFARIVNFEV</sequence>
<reference key="1">
    <citation type="journal article" date="2003" name="DNA Res.">
        <title>Complete genome structure of Gloeobacter violaceus PCC 7421, a cyanobacterium that lacks thylakoids.</title>
        <authorList>
            <person name="Nakamura Y."/>
            <person name="Kaneko T."/>
            <person name="Sato S."/>
            <person name="Mimuro M."/>
            <person name="Miyashita H."/>
            <person name="Tsuchiya T."/>
            <person name="Sasamoto S."/>
            <person name="Watanabe A."/>
            <person name="Kawashima K."/>
            <person name="Kishida Y."/>
            <person name="Kiyokawa C."/>
            <person name="Kohara M."/>
            <person name="Matsumoto M."/>
            <person name="Matsuno A."/>
            <person name="Nakazaki N."/>
            <person name="Shimpo S."/>
            <person name="Takeuchi C."/>
            <person name="Yamada M."/>
            <person name="Tabata S."/>
        </authorList>
    </citation>
    <scope>NUCLEOTIDE SEQUENCE [LARGE SCALE GENOMIC DNA]</scope>
    <source>
        <strain>ATCC 29082 / PCC 7421</strain>
    </source>
</reference>
<name>TPIS_GLOVI</name>
<evidence type="ECO:0000255" key="1">
    <source>
        <dbReference type="HAMAP-Rule" id="MF_00147"/>
    </source>
</evidence>
<organism>
    <name type="scientific">Gloeobacter violaceus (strain ATCC 29082 / PCC 7421)</name>
    <dbReference type="NCBI Taxonomy" id="251221"/>
    <lineage>
        <taxon>Bacteria</taxon>
        <taxon>Bacillati</taxon>
        <taxon>Cyanobacteriota</taxon>
        <taxon>Cyanophyceae</taxon>
        <taxon>Gloeobacterales</taxon>
        <taxon>Gloeobacteraceae</taxon>
        <taxon>Gloeobacter</taxon>
    </lineage>
</organism>
<dbReference type="EC" id="5.3.1.1" evidence="1"/>
<dbReference type="EMBL" id="BA000045">
    <property type="protein sequence ID" value="BAC88981.1"/>
    <property type="molecule type" value="Genomic_DNA"/>
</dbReference>
<dbReference type="RefSeq" id="NP_923986.1">
    <property type="nucleotide sequence ID" value="NC_005125.1"/>
</dbReference>
<dbReference type="RefSeq" id="WP_011141042.1">
    <property type="nucleotide sequence ID" value="NC_005125.1"/>
</dbReference>
<dbReference type="SMR" id="Q7NLT1"/>
<dbReference type="FunCoup" id="Q7NLT1">
    <property type="interactions" value="351"/>
</dbReference>
<dbReference type="STRING" id="251221.gene:10758518"/>
<dbReference type="EnsemblBacteria" id="BAC88981">
    <property type="protein sequence ID" value="BAC88981"/>
    <property type="gene ID" value="BAC88981"/>
</dbReference>
<dbReference type="KEGG" id="gvi:gll1040"/>
<dbReference type="PATRIC" id="fig|251221.4.peg.1066"/>
<dbReference type="eggNOG" id="COG0149">
    <property type="taxonomic scope" value="Bacteria"/>
</dbReference>
<dbReference type="HOGENOM" id="CLU_024251_2_1_3"/>
<dbReference type="InParanoid" id="Q7NLT1"/>
<dbReference type="OrthoDB" id="9809429at2"/>
<dbReference type="PhylomeDB" id="Q7NLT1"/>
<dbReference type="UniPathway" id="UPA00109">
    <property type="reaction ID" value="UER00189"/>
</dbReference>
<dbReference type="UniPathway" id="UPA00138"/>
<dbReference type="Proteomes" id="UP000000557">
    <property type="component" value="Chromosome"/>
</dbReference>
<dbReference type="GO" id="GO:0005829">
    <property type="term" value="C:cytosol"/>
    <property type="evidence" value="ECO:0000318"/>
    <property type="project" value="GO_Central"/>
</dbReference>
<dbReference type="GO" id="GO:0004807">
    <property type="term" value="F:triose-phosphate isomerase activity"/>
    <property type="evidence" value="ECO:0000318"/>
    <property type="project" value="GO_Central"/>
</dbReference>
<dbReference type="GO" id="GO:0006094">
    <property type="term" value="P:gluconeogenesis"/>
    <property type="evidence" value="ECO:0000318"/>
    <property type="project" value="GO_Central"/>
</dbReference>
<dbReference type="GO" id="GO:0046166">
    <property type="term" value="P:glyceraldehyde-3-phosphate biosynthetic process"/>
    <property type="evidence" value="ECO:0000318"/>
    <property type="project" value="GO_Central"/>
</dbReference>
<dbReference type="GO" id="GO:0019563">
    <property type="term" value="P:glycerol catabolic process"/>
    <property type="evidence" value="ECO:0000318"/>
    <property type="project" value="GO_Central"/>
</dbReference>
<dbReference type="GO" id="GO:0006096">
    <property type="term" value="P:glycolytic process"/>
    <property type="evidence" value="ECO:0000318"/>
    <property type="project" value="GO_Central"/>
</dbReference>
<dbReference type="CDD" id="cd00311">
    <property type="entry name" value="TIM"/>
    <property type="match status" value="1"/>
</dbReference>
<dbReference type="FunFam" id="3.20.20.70:FF:000016">
    <property type="entry name" value="Triosephosphate isomerase"/>
    <property type="match status" value="1"/>
</dbReference>
<dbReference type="Gene3D" id="3.20.20.70">
    <property type="entry name" value="Aldolase class I"/>
    <property type="match status" value="1"/>
</dbReference>
<dbReference type="HAMAP" id="MF_00147_B">
    <property type="entry name" value="TIM_B"/>
    <property type="match status" value="1"/>
</dbReference>
<dbReference type="InterPro" id="IPR013785">
    <property type="entry name" value="Aldolase_TIM"/>
</dbReference>
<dbReference type="InterPro" id="IPR035990">
    <property type="entry name" value="TIM_sf"/>
</dbReference>
<dbReference type="InterPro" id="IPR022896">
    <property type="entry name" value="TrioseP_Isoase_bac/euk"/>
</dbReference>
<dbReference type="InterPro" id="IPR000652">
    <property type="entry name" value="Triosephosphate_isomerase"/>
</dbReference>
<dbReference type="InterPro" id="IPR020861">
    <property type="entry name" value="Triosephosphate_isomerase_AS"/>
</dbReference>
<dbReference type="NCBIfam" id="TIGR00419">
    <property type="entry name" value="tim"/>
    <property type="match status" value="1"/>
</dbReference>
<dbReference type="PANTHER" id="PTHR21139">
    <property type="entry name" value="TRIOSEPHOSPHATE ISOMERASE"/>
    <property type="match status" value="1"/>
</dbReference>
<dbReference type="PANTHER" id="PTHR21139:SF42">
    <property type="entry name" value="TRIOSEPHOSPHATE ISOMERASE"/>
    <property type="match status" value="1"/>
</dbReference>
<dbReference type="Pfam" id="PF00121">
    <property type="entry name" value="TIM"/>
    <property type="match status" value="1"/>
</dbReference>
<dbReference type="SUPFAM" id="SSF51351">
    <property type="entry name" value="Triosephosphate isomerase (TIM)"/>
    <property type="match status" value="1"/>
</dbReference>
<dbReference type="PROSITE" id="PS00171">
    <property type="entry name" value="TIM_1"/>
    <property type="match status" value="1"/>
</dbReference>
<dbReference type="PROSITE" id="PS51440">
    <property type="entry name" value="TIM_2"/>
    <property type="match status" value="1"/>
</dbReference>
<accession>Q7NLT1</accession>
<gene>
    <name evidence="1" type="primary">tpiA</name>
    <name type="synonym">tpi</name>
    <name type="ordered locus">gll1040</name>
</gene>
<feature type="chain" id="PRO_0000090224" description="Triosephosphate isomerase">
    <location>
        <begin position="1"/>
        <end position="240"/>
    </location>
</feature>
<feature type="active site" description="Electrophile" evidence="1">
    <location>
        <position position="94"/>
    </location>
</feature>
<feature type="active site" description="Proton acceptor" evidence="1">
    <location>
        <position position="163"/>
    </location>
</feature>
<feature type="binding site" evidence="1">
    <location>
        <begin position="9"/>
        <end position="11"/>
    </location>
    <ligand>
        <name>substrate</name>
    </ligand>
</feature>
<feature type="binding site" evidence="1">
    <location>
        <position position="169"/>
    </location>
    <ligand>
        <name>substrate</name>
    </ligand>
</feature>
<feature type="binding site" evidence="1">
    <location>
        <position position="202"/>
    </location>
    <ligand>
        <name>substrate</name>
    </ligand>
</feature>
<feature type="binding site" evidence="1">
    <location>
        <begin position="223"/>
        <end position="224"/>
    </location>
    <ligand>
        <name>substrate</name>
    </ligand>
</feature>
<keyword id="KW-0963">Cytoplasm</keyword>
<keyword id="KW-0312">Gluconeogenesis</keyword>
<keyword id="KW-0324">Glycolysis</keyword>
<keyword id="KW-0413">Isomerase</keyword>
<keyword id="KW-1185">Reference proteome</keyword>
<comment type="function">
    <text evidence="1">Involved in the gluconeogenesis. Catalyzes stereospecifically the conversion of dihydroxyacetone phosphate (DHAP) to D-glyceraldehyde-3-phosphate (G3P).</text>
</comment>
<comment type="catalytic activity">
    <reaction evidence="1">
        <text>D-glyceraldehyde 3-phosphate = dihydroxyacetone phosphate</text>
        <dbReference type="Rhea" id="RHEA:18585"/>
        <dbReference type="ChEBI" id="CHEBI:57642"/>
        <dbReference type="ChEBI" id="CHEBI:59776"/>
        <dbReference type="EC" id="5.3.1.1"/>
    </reaction>
</comment>
<comment type="pathway">
    <text evidence="1">Carbohydrate biosynthesis; gluconeogenesis.</text>
</comment>
<comment type="pathway">
    <text evidence="1">Carbohydrate degradation; glycolysis; D-glyceraldehyde 3-phosphate from glycerone phosphate: step 1/1.</text>
</comment>
<comment type="subunit">
    <text evidence="1">Homodimer.</text>
</comment>
<comment type="subcellular location">
    <subcellularLocation>
        <location evidence="1">Cytoplasm</location>
    </subcellularLocation>
</comment>
<comment type="similarity">
    <text evidence="1">Belongs to the triosephosphate isomerase family.</text>
</comment>
<proteinExistence type="inferred from homology"/>